<feature type="signal peptide" evidence="4">
    <location>
        <begin position="1"/>
        <end position="19"/>
    </location>
</feature>
<feature type="chain" id="PRO_0000035749" description="Saxiphilin">
    <location>
        <begin position="20"/>
        <end position="844"/>
    </location>
</feature>
<feature type="domain" description="Transferrin-like 1; first part" evidence="3">
    <location>
        <begin position="26"/>
        <end position="106"/>
    </location>
</feature>
<feature type="domain" description="Thyroglobulin type-1 1" evidence="2">
    <location>
        <begin position="107"/>
        <end position="172"/>
    </location>
</feature>
<feature type="domain" description="Thyroglobulin type-1 2" evidence="2">
    <location>
        <begin position="177"/>
        <end position="244"/>
    </location>
</feature>
<feature type="domain" description="Transferrin-like 1; second part" evidence="3">
    <location>
        <begin position="245"/>
        <end position="482"/>
    </location>
</feature>
<feature type="domain" description="Transferrin-like 2" evidence="3">
    <location>
        <begin position="492"/>
        <end position="828"/>
    </location>
</feature>
<feature type="region of interest" description="Absent in transferrins">
    <location>
        <begin position="109"/>
        <end position="249"/>
    </location>
</feature>
<feature type="disulfide bond" evidence="1">
    <location>
        <begin position="29"/>
        <end position="64"/>
    </location>
</feature>
<feature type="disulfide bond" evidence="1">
    <location>
        <begin position="39"/>
        <end position="55"/>
    </location>
</feature>
<feature type="disulfide bond" evidence="1">
    <location>
        <begin position="110"/>
        <end position="130"/>
    </location>
</feature>
<feature type="disulfide bond" evidence="1">
    <location>
        <begin position="141"/>
        <end position="148"/>
    </location>
</feature>
<feature type="disulfide bond" evidence="1">
    <location>
        <begin position="150"/>
        <end position="172"/>
    </location>
</feature>
<feature type="disulfide bond" evidence="1">
    <location>
        <begin position="180"/>
        <end position="202"/>
    </location>
</feature>
<feature type="disulfide bond" evidence="1">
    <location>
        <begin position="222"/>
        <end position="244"/>
    </location>
</feature>
<feature type="disulfide bond" evidence="1">
    <location>
        <begin position="277"/>
        <end position="360"/>
    </location>
</feature>
<feature type="disulfide bond" evidence="1">
    <location>
        <begin position="322"/>
        <end position="335"/>
    </location>
</feature>
<feature type="disulfide bond" evidence="1">
    <location>
        <begin position="332"/>
        <end position="343"/>
    </location>
</feature>
<feature type="disulfide bond" evidence="1">
    <location>
        <begin position="388"/>
        <end position="402"/>
    </location>
</feature>
<feature type="disulfide bond" evidence="1">
    <location>
        <begin position="495"/>
        <end position="527"/>
    </location>
</feature>
<feature type="disulfide bond" evidence="1">
    <location>
        <begin position="505"/>
        <end position="518"/>
    </location>
</feature>
<feature type="disulfide bond" evidence="1">
    <location>
        <begin position="552"/>
        <end position="839"/>
    </location>
</feature>
<feature type="disulfide bond" evidence="1">
    <location>
        <begin position="570"/>
        <end position="799"/>
    </location>
</feature>
<feature type="disulfide bond" evidence="1">
    <location>
        <begin position="607"/>
        <end position="685"/>
    </location>
</feature>
<feature type="disulfide bond" evidence="1">
    <location>
        <begin position="641"/>
        <end position="655"/>
    </location>
</feature>
<feature type="disulfide bond" evidence="1">
    <location>
        <begin position="652"/>
        <end position="668"/>
    </location>
</feature>
<feature type="disulfide bond" evidence="1">
    <location>
        <begin position="725"/>
        <end position="739"/>
    </location>
</feature>
<feature type="strand" evidence="7">
    <location>
        <begin position="24"/>
        <end position="32"/>
    </location>
</feature>
<feature type="helix" evidence="7">
    <location>
        <begin position="33"/>
        <end position="45"/>
    </location>
</feature>
<feature type="strand" evidence="7">
    <location>
        <begin position="51"/>
        <end position="57"/>
    </location>
</feature>
<feature type="helix" evidence="7">
    <location>
        <begin position="61"/>
        <end position="69"/>
    </location>
</feature>
<feature type="strand" evidence="7">
    <location>
        <begin position="75"/>
        <end position="78"/>
    </location>
</feature>
<feature type="helix" evidence="7">
    <location>
        <begin position="80"/>
        <end position="82"/>
    </location>
</feature>
<feature type="helix" evidence="7">
    <location>
        <begin position="83"/>
        <end position="86"/>
    </location>
</feature>
<feature type="turn" evidence="7">
    <location>
        <begin position="89"/>
        <end position="91"/>
    </location>
</feature>
<feature type="strand" evidence="7">
    <location>
        <begin position="93"/>
        <end position="98"/>
    </location>
</feature>
<feature type="helix" evidence="11">
    <location>
        <begin position="103"/>
        <end position="106"/>
    </location>
</feature>
<feature type="helix" evidence="7">
    <location>
        <begin position="109"/>
        <end position="119"/>
    </location>
</feature>
<feature type="strand" evidence="8">
    <location>
        <begin position="132"/>
        <end position="134"/>
    </location>
</feature>
<feature type="strand" evidence="7">
    <location>
        <begin position="138"/>
        <end position="141"/>
    </location>
</feature>
<feature type="turn" evidence="7">
    <location>
        <begin position="143"/>
        <end position="145"/>
    </location>
</feature>
<feature type="strand" evidence="7">
    <location>
        <begin position="148"/>
        <end position="151"/>
    </location>
</feature>
<feature type="helix" evidence="7">
    <location>
        <begin position="179"/>
        <end position="187"/>
    </location>
</feature>
<feature type="helix" evidence="7">
    <location>
        <begin position="204"/>
        <end position="206"/>
    </location>
</feature>
<feature type="strand" evidence="7">
    <location>
        <begin position="210"/>
        <end position="213"/>
    </location>
</feature>
<feature type="strand" evidence="7">
    <location>
        <begin position="215"/>
        <end position="217"/>
    </location>
</feature>
<feature type="strand" evidence="7">
    <location>
        <begin position="220"/>
        <end position="223"/>
    </location>
</feature>
<feature type="strand" evidence="11">
    <location>
        <begin position="225"/>
        <end position="227"/>
    </location>
</feature>
<feature type="strand" evidence="7">
    <location>
        <begin position="247"/>
        <end position="250"/>
    </location>
</feature>
<feature type="strand" evidence="7">
    <location>
        <begin position="254"/>
        <end position="261"/>
    </location>
</feature>
<feature type="helix" evidence="7">
    <location>
        <begin position="268"/>
        <end position="270"/>
    </location>
</feature>
<feature type="strand" evidence="7">
    <location>
        <begin position="276"/>
        <end position="279"/>
    </location>
</feature>
<feature type="turn" evidence="7">
    <location>
        <begin position="284"/>
        <end position="287"/>
    </location>
</feature>
<feature type="helix" evidence="7">
    <location>
        <begin position="288"/>
        <end position="296"/>
    </location>
</feature>
<feature type="turn" evidence="7">
    <location>
        <begin position="305"/>
        <end position="307"/>
    </location>
</feature>
<feature type="helix" evidence="7">
    <location>
        <begin position="310"/>
        <end position="317"/>
    </location>
</feature>
<feature type="strand" evidence="7">
    <location>
        <begin position="318"/>
        <end position="322"/>
    </location>
</feature>
<feature type="helix" evidence="7">
    <location>
        <begin position="329"/>
        <end position="332"/>
    </location>
</feature>
<feature type="turn" evidence="7">
    <location>
        <begin position="339"/>
        <end position="343"/>
    </location>
</feature>
<feature type="helix" evidence="7">
    <location>
        <begin position="353"/>
        <end position="362"/>
    </location>
</feature>
<feature type="strand" evidence="7">
    <location>
        <begin position="367"/>
        <end position="372"/>
    </location>
</feature>
<feature type="helix" evidence="7">
    <location>
        <begin position="373"/>
        <end position="375"/>
    </location>
</feature>
<feature type="helix" evidence="7">
    <location>
        <begin position="378"/>
        <end position="381"/>
    </location>
</feature>
<feature type="strand" evidence="7">
    <location>
        <begin position="384"/>
        <end position="388"/>
    </location>
</feature>
<feature type="turn" evidence="7">
    <location>
        <begin position="389"/>
        <end position="391"/>
    </location>
</feature>
<feature type="strand" evidence="7">
    <location>
        <begin position="392"/>
        <end position="394"/>
    </location>
</feature>
<feature type="helix" evidence="7">
    <location>
        <begin position="396"/>
        <end position="398"/>
    </location>
</feature>
<feature type="turn" evidence="7">
    <location>
        <begin position="399"/>
        <end position="401"/>
    </location>
</feature>
<feature type="strand" evidence="8">
    <location>
        <begin position="402"/>
        <end position="404"/>
    </location>
</feature>
<feature type="strand" evidence="7">
    <location>
        <begin position="411"/>
        <end position="415"/>
    </location>
</feature>
<feature type="helix" evidence="7">
    <location>
        <begin position="421"/>
        <end position="433"/>
    </location>
</feature>
<feature type="strand" evidence="7">
    <location>
        <begin position="445"/>
        <end position="449"/>
    </location>
</feature>
<feature type="helix" evidence="7">
    <location>
        <begin position="465"/>
        <end position="469"/>
    </location>
</feature>
<feature type="helix" evidence="7">
    <location>
        <begin position="471"/>
        <end position="480"/>
    </location>
</feature>
<feature type="strand" evidence="7">
    <location>
        <begin position="492"/>
        <end position="498"/>
    </location>
</feature>
<feature type="helix" evidence="7">
    <location>
        <begin position="499"/>
        <end position="510"/>
    </location>
</feature>
<feature type="turn" evidence="7">
    <location>
        <begin position="511"/>
        <end position="514"/>
    </location>
</feature>
<feature type="strand" evidence="7">
    <location>
        <begin position="515"/>
        <end position="520"/>
    </location>
</feature>
<feature type="helix" evidence="7">
    <location>
        <begin position="524"/>
        <end position="532"/>
    </location>
</feature>
<feature type="strand" evidence="7">
    <location>
        <begin position="538"/>
        <end position="541"/>
    </location>
</feature>
<feature type="helix" evidence="7">
    <location>
        <begin position="543"/>
        <end position="551"/>
    </location>
</feature>
<feature type="strand" evidence="7">
    <location>
        <begin position="555"/>
        <end position="561"/>
    </location>
</feature>
<feature type="turn" evidence="6">
    <location>
        <begin position="564"/>
        <end position="566"/>
    </location>
</feature>
<feature type="helix" evidence="7">
    <location>
        <begin position="568"/>
        <end position="571"/>
    </location>
</feature>
<feature type="turn" evidence="9">
    <location>
        <begin position="572"/>
        <end position="574"/>
    </location>
</feature>
<feature type="strand" evidence="7">
    <location>
        <begin position="584"/>
        <end position="586"/>
    </location>
</feature>
<feature type="strand" evidence="7">
    <location>
        <begin position="588"/>
        <end position="591"/>
    </location>
</feature>
<feature type="helix" evidence="7">
    <location>
        <begin position="598"/>
        <end position="600"/>
    </location>
</feature>
<feature type="strand" evidence="10">
    <location>
        <begin position="602"/>
        <end position="604"/>
    </location>
</feature>
<feature type="strand" evidence="11">
    <location>
        <begin position="606"/>
        <end position="609"/>
    </location>
</feature>
<feature type="turn" evidence="7">
    <location>
        <begin position="614"/>
        <end position="617"/>
    </location>
</feature>
<feature type="helix" evidence="7">
    <location>
        <begin position="618"/>
        <end position="627"/>
    </location>
</feature>
<feature type="strand" evidence="5">
    <location>
        <begin position="628"/>
        <end position="630"/>
    </location>
</feature>
<feature type="strand" evidence="7">
    <location>
        <begin position="633"/>
        <end position="636"/>
    </location>
</feature>
<feature type="strand" evidence="8">
    <location>
        <begin position="637"/>
        <end position="639"/>
    </location>
</feature>
<feature type="strand" evidence="5">
    <location>
        <begin position="643"/>
        <end position="645"/>
    </location>
</feature>
<feature type="strand" evidence="7">
    <location>
        <begin position="647"/>
        <end position="649"/>
    </location>
</feature>
<feature type="turn" evidence="7">
    <location>
        <begin position="650"/>
        <end position="653"/>
    </location>
</feature>
<feature type="helix" evidence="11">
    <location>
        <begin position="659"/>
        <end position="661"/>
    </location>
</feature>
<feature type="strand" evidence="5">
    <location>
        <begin position="662"/>
        <end position="664"/>
    </location>
</feature>
<feature type="strand" evidence="9">
    <location>
        <begin position="674"/>
        <end position="676"/>
    </location>
</feature>
<feature type="helix" evidence="7">
    <location>
        <begin position="678"/>
        <end position="687"/>
    </location>
</feature>
<feature type="strand" evidence="11">
    <location>
        <begin position="691"/>
        <end position="696"/>
    </location>
</feature>
<feature type="helix" evidence="7">
    <location>
        <begin position="698"/>
        <end position="701"/>
    </location>
</feature>
<feature type="helix" evidence="7">
    <location>
        <begin position="704"/>
        <end position="706"/>
    </location>
</feature>
<feature type="strand" evidence="7">
    <location>
        <begin position="711"/>
        <end position="715"/>
    </location>
</feature>
<feature type="turn" evidence="7">
    <location>
        <begin position="718"/>
        <end position="720"/>
    </location>
</feature>
<feature type="strand" evidence="7">
    <location>
        <begin position="721"/>
        <end position="723"/>
    </location>
</feature>
<feature type="strand" evidence="7">
    <location>
        <begin position="726"/>
        <end position="728"/>
    </location>
</feature>
<feature type="strand" evidence="5">
    <location>
        <begin position="730"/>
        <end position="732"/>
    </location>
</feature>
<feature type="helix" evidence="11">
    <location>
        <begin position="733"/>
        <end position="735"/>
    </location>
</feature>
<feature type="turn" evidence="7">
    <location>
        <begin position="736"/>
        <end position="738"/>
    </location>
</feature>
<feature type="strand" evidence="7">
    <location>
        <begin position="741"/>
        <end position="743"/>
    </location>
</feature>
<feature type="strand" evidence="7">
    <location>
        <begin position="748"/>
        <end position="751"/>
    </location>
</feature>
<feature type="helix" evidence="7">
    <location>
        <begin position="753"/>
        <end position="755"/>
    </location>
</feature>
<feature type="helix" evidence="7">
    <location>
        <begin position="756"/>
        <end position="769"/>
    </location>
</feature>
<feature type="strand" evidence="9">
    <location>
        <begin position="771"/>
        <end position="773"/>
    </location>
</feature>
<feature type="turn" evidence="7">
    <location>
        <begin position="775"/>
        <end position="779"/>
    </location>
</feature>
<feature type="strand" evidence="7">
    <location>
        <begin position="789"/>
        <end position="793"/>
    </location>
</feature>
<feature type="strand" evidence="7">
    <location>
        <begin position="799"/>
        <end position="802"/>
    </location>
</feature>
<feature type="helix" evidence="7">
    <location>
        <begin position="810"/>
        <end position="815"/>
    </location>
</feature>
<feature type="helix" evidence="7">
    <location>
        <begin position="817"/>
        <end position="824"/>
    </location>
</feature>
<feature type="helix" evidence="7">
    <location>
        <begin position="834"/>
        <end position="838"/>
    </location>
</feature>
<feature type="strand" evidence="7">
    <location>
        <begin position="840"/>
        <end position="844"/>
    </location>
</feature>
<comment type="function">
    <text>Binds specifically to the neurotoxin saxitoxin. Its physiological role may be to transport or sequester an endogenous organic molecule other than Fe(3+). It may participate in a detoxification mechanism for neutralizing a microbial toxin.</text>
</comment>
<comment type="subunit">
    <text>Monomer.</text>
</comment>
<comment type="subcellular location">
    <subcellularLocation>
        <location>Secreted</location>
    </subcellularLocation>
</comment>
<comment type="tissue specificity">
    <text>Plasma. Highest levels of transcripts found in the liver, the lung, the pancreas and the brain.</text>
</comment>
<comment type="similarity">
    <text evidence="3">Belongs to the transferrin family.</text>
</comment>
<keyword id="KW-0002">3D-structure</keyword>
<keyword id="KW-0903">Direct protein sequencing</keyword>
<keyword id="KW-1015">Disulfide bond</keyword>
<keyword id="KW-0677">Repeat</keyword>
<keyword id="KW-0964">Secreted</keyword>
<keyword id="KW-0732">Signal</keyword>
<dbReference type="EMBL" id="U05246">
    <property type="protein sequence ID" value="AAA75440.1"/>
    <property type="molecule type" value="mRNA"/>
</dbReference>
<dbReference type="PIR" id="A39426">
    <property type="entry name" value="A39426"/>
</dbReference>
<dbReference type="PDB" id="6O0D">
    <property type="method" value="X-ray"/>
    <property type="resolution" value="2.50 A"/>
    <property type="chains" value="A/B=1-844"/>
</dbReference>
<dbReference type="PDB" id="6O0E">
    <property type="method" value="X-ray"/>
    <property type="resolution" value="2.50 A"/>
    <property type="chains" value="A/B=1-844"/>
</dbReference>
<dbReference type="PDB" id="6O0F">
    <property type="method" value="X-ray"/>
    <property type="resolution" value="2.12 A"/>
    <property type="chains" value="A/B=1-844"/>
</dbReference>
<dbReference type="PDB" id="8D6P">
    <property type="method" value="X-ray"/>
    <property type="resolution" value="2.60 A"/>
    <property type="chains" value="A/B=1-844"/>
</dbReference>
<dbReference type="PDB" id="8D6Q">
    <property type="method" value="X-ray"/>
    <property type="resolution" value="2.70 A"/>
    <property type="chains" value="A/B=1-844"/>
</dbReference>
<dbReference type="PDB" id="8D6S">
    <property type="method" value="X-ray"/>
    <property type="resolution" value="2.60 A"/>
    <property type="chains" value="A/B=1-844"/>
</dbReference>
<dbReference type="PDB" id="8D6T">
    <property type="method" value="X-ray"/>
    <property type="resolution" value="2.15 A"/>
    <property type="chains" value="A/B=1-844"/>
</dbReference>
<dbReference type="PDB" id="8D6U">
    <property type="method" value="X-ray"/>
    <property type="resolution" value="2.65 A"/>
    <property type="chains" value="A/B=1-844"/>
</dbReference>
<dbReference type="PDBsum" id="6O0D"/>
<dbReference type="PDBsum" id="6O0E"/>
<dbReference type="PDBsum" id="6O0F"/>
<dbReference type="PDBsum" id="8D6P"/>
<dbReference type="PDBsum" id="8D6Q"/>
<dbReference type="PDBsum" id="8D6S"/>
<dbReference type="PDBsum" id="8D6T"/>
<dbReference type="PDBsum" id="8D6U"/>
<dbReference type="SMR" id="P31226"/>
<dbReference type="GO" id="GO:0005769">
    <property type="term" value="C:early endosome"/>
    <property type="evidence" value="ECO:0007669"/>
    <property type="project" value="TreeGrafter"/>
</dbReference>
<dbReference type="GO" id="GO:0005615">
    <property type="term" value="C:extracellular space"/>
    <property type="evidence" value="ECO:0007669"/>
    <property type="project" value="InterPro"/>
</dbReference>
<dbReference type="GO" id="GO:0005886">
    <property type="term" value="C:plasma membrane"/>
    <property type="evidence" value="ECO:0007669"/>
    <property type="project" value="TreeGrafter"/>
</dbReference>
<dbReference type="GO" id="GO:0055037">
    <property type="term" value="C:recycling endosome"/>
    <property type="evidence" value="ECO:0007669"/>
    <property type="project" value="TreeGrafter"/>
</dbReference>
<dbReference type="GO" id="GO:0019731">
    <property type="term" value="P:antibacterial humoral response"/>
    <property type="evidence" value="ECO:0007669"/>
    <property type="project" value="TreeGrafter"/>
</dbReference>
<dbReference type="GO" id="GO:0006826">
    <property type="term" value="P:iron ion transport"/>
    <property type="evidence" value="ECO:0007669"/>
    <property type="project" value="TreeGrafter"/>
</dbReference>
<dbReference type="CDD" id="cd00191">
    <property type="entry name" value="TY"/>
    <property type="match status" value="2"/>
</dbReference>
<dbReference type="FunFam" id="3.40.190.10:FF:000095">
    <property type="entry name" value="Lactotransferrin"/>
    <property type="match status" value="1"/>
</dbReference>
<dbReference type="Gene3D" id="3.40.190.10">
    <property type="entry name" value="Periplasmic binding protein-like II"/>
    <property type="match status" value="5"/>
</dbReference>
<dbReference type="Gene3D" id="4.10.800.10">
    <property type="entry name" value="Thyroglobulin type-1"/>
    <property type="match status" value="1"/>
</dbReference>
<dbReference type="InterPro" id="IPR000716">
    <property type="entry name" value="Thyroglobulin_1"/>
</dbReference>
<dbReference type="InterPro" id="IPR036857">
    <property type="entry name" value="Thyroglobulin_1_sf"/>
</dbReference>
<dbReference type="InterPro" id="IPR016357">
    <property type="entry name" value="Transferrin"/>
</dbReference>
<dbReference type="InterPro" id="IPR001156">
    <property type="entry name" value="Transferrin-like_dom"/>
</dbReference>
<dbReference type="PANTHER" id="PTHR11485:SF31">
    <property type="entry name" value="SEROTRANSFERRIN"/>
    <property type="match status" value="1"/>
</dbReference>
<dbReference type="PANTHER" id="PTHR11485">
    <property type="entry name" value="TRANSFERRIN"/>
    <property type="match status" value="1"/>
</dbReference>
<dbReference type="Pfam" id="PF00086">
    <property type="entry name" value="Thyroglobulin_1"/>
    <property type="match status" value="2"/>
</dbReference>
<dbReference type="Pfam" id="PF00405">
    <property type="entry name" value="Transferrin"/>
    <property type="match status" value="3"/>
</dbReference>
<dbReference type="PIRSF" id="PIRSF002549">
    <property type="entry name" value="Transferrin"/>
    <property type="match status" value="1"/>
</dbReference>
<dbReference type="PRINTS" id="PR00422">
    <property type="entry name" value="TRANSFERRIN"/>
</dbReference>
<dbReference type="SMART" id="SM00094">
    <property type="entry name" value="TR_FER"/>
    <property type="match status" value="2"/>
</dbReference>
<dbReference type="SMART" id="SM00211">
    <property type="entry name" value="TY"/>
    <property type="match status" value="2"/>
</dbReference>
<dbReference type="SUPFAM" id="SSF53850">
    <property type="entry name" value="Periplasmic binding protein-like II"/>
    <property type="match status" value="2"/>
</dbReference>
<dbReference type="SUPFAM" id="SSF57610">
    <property type="entry name" value="Thyroglobulin type-1 domain"/>
    <property type="match status" value="2"/>
</dbReference>
<dbReference type="PROSITE" id="PS00484">
    <property type="entry name" value="THYROGLOBULIN_1_1"/>
    <property type="match status" value="2"/>
</dbReference>
<dbReference type="PROSITE" id="PS51162">
    <property type="entry name" value="THYROGLOBULIN_1_2"/>
    <property type="match status" value="2"/>
</dbReference>
<dbReference type="PROSITE" id="PS51408">
    <property type="entry name" value="TRANSFERRIN_LIKE_4"/>
    <property type="match status" value="2"/>
</dbReference>
<name>SAX_AQUCT</name>
<reference key="1">
    <citation type="journal article" date="1994" name="Proc. Natl. Acad. Sci. U.S.A.">
        <title>Molecular cloning of bullfrog saxiphilin: a unique relative of the transferrin family that binds saxitoxin.</title>
        <authorList>
            <person name="Morabito M.A."/>
            <person name="Moczydlowski E."/>
        </authorList>
    </citation>
    <scope>NUCLEOTIDE SEQUENCE [MRNA]</scope>
    <source>
        <tissue>Liver</tissue>
    </source>
</reference>
<reference key="2">
    <citation type="journal article" date="1995" name="Proc. Natl. Acad. Sci. U.S.A.">
        <authorList>
            <person name="Morabito M.A."/>
            <person name="Moczydlowski E."/>
        </authorList>
    </citation>
    <scope>ERRATUM OF PUBMED:8146142</scope>
    <scope>SEQUENCE REVISION</scope>
</reference>
<reference key="3">
    <citation type="journal article" date="1991" name="J. Biol. Chem.">
        <title>Purification and partial sequencing of saxiphilin, a saxitoxin-binding protein from the bullfrog, reveals homology to transferrin.</title>
        <authorList>
            <person name="Li Y."/>
            <person name="Moczydlowski E."/>
        </authorList>
    </citation>
    <scope>PROTEIN SEQUENCE OF 20-44; 317-333; 360-371; 541-571; 606-624 AND 690-714</scope>
    <source>
        <tissue>Plasma</tissue>
    </source>
</reference>
<protein>
    <recommendedName>
        <fullName>Saxiphilin</fullName>
        <shortName>SAX</shortName>
    </recommendedName>
</protein>
<proteinExistence type="evidence at protein level"/>
<evidence type="ECO:0000250" key="1"/>
<evidence type="ECO:0000255" key="2">
    <source>
        <dbReference type="PROSITE-ProRule" id="PRU00500"/>
    </source>
</evidence>
<evidence type="ECO:0000255" key="3">
    <source>
        <dbReference type="PROSITE-ProRule" id="PRU00741"/>
    </source>
</evidence>
<evidence type="ECO:0000269" key="4">
    <source>
    </source>
</evidence>
<evidence type="ECO:0007829" key="5">
    <source>
        <dbReference type="PDB" id="6O0D"/>
    </source>
</evidence>
<evidence type="ECO:0007829" key="6">
    <source>
        <dbReference type="PDB" id="6O0E"/>
    </source>
</evidence>
<evidence type="ECO:0007829" key="7">
    <source>
        <dbReference type="PDB" id="6O0F"/>
    </source>
</evidence>
<evidence type="ECO:0007829" key="8">
    <source>
        <dbReference type="PDB" id="8D6P"/>
    </source>
</evidence>
<evidence type="ECO:0007829" key="9">
    <source>
        <dbReference type="PDB" id="8D6Q"/>
    </source>
</evidence>
<evidence type="ECO:0007829" key="10">
    <source>
        <dbReference type="PDB" id="8D6S"/>
    </source>
</evidence>
<evidence type="ECO:0007829" key="11">
    <source>
        <dbReference type="PDB" id="8D6T"/>
    </source>
</evidence>
<sequence length="844" mass="93089">MAPTFQTALFFTIISLSFAAPNAKQVRWCAISDLEQKKCNDLVGSCNVPDITLVCVLRSSTEDCMTAIKDGQADAMFLDSGEVYEASKDPYNLKPIIAEPYSSNRDLQKCLKERQQALAKKMIGHYIPQCDEKGNYQPQQCHGSTGHCWCVNAMGEKISGTNTPPGQTRATCERHELPKCLKERQVALGGDEKVLGRFVPQCDEKGNYEPQQFHGSTGYSWCVNAIGEEIAGTKTPPGKIPATCQKHDLVTTCHYAVAMVKKSSAFQFNQLKGKRSCHSGVSKTDGWKALVTVLVEKKLLSWDGPAKESIQRAMSKFFSVSCIPGATQTNLCKQCKGEEGKNCKNSHDEPYYGNYGAFRCLKEDMGDVAFLRSTALSDEHSEVYELLCPDNTRKPLNKYKECNLGTVPAGTVVTRKISDKTEDINNFLMEAQKRQCKLFSSAHGKDLMFDDSTLQLALLSSEVDAFLYLGVKLFHAMKALTGDAHLPSKNKVRWCTINKLEKMKCDDWSAVSGGAIACTEASCPKGCVKQILKGEADAVKLEVQYMYEALMCGLLPAVEEYHNKDDFGPCKTPGSPYTDFGTLRAVALVKKSNKDINWNNIKGKKSCHTGVGDIAGWVIPVSLIRRQNDNSDIDSFFGESCAPGSDTKSNLCKLCIGDPKNSAANTKCSLSDKEAYYGNQGAFRCLVEKGDVAFVPHTVVFENTDGKNPAVWAKNLKSEDFELLCLDGSRAPVSNYKSCKLSGIPPPAIVTREESISDVVRIVANQQSLYGRKGFEKDMFQLFSSNKGNNLLFNDNTQCLITFDRQPKDIMEDYFGKPYYTTVYGASRSAMSSELISACTIKHC</sequence>
<organism>
    <name type="scientific">Aquarana catesbeiana</name>
    <name type="common">American bullfrog</name>
    <name type="synonym">Rana catesbeiana</name>
    <dbReference type="NCBI Taxonomy" id="8400"/>
    <lineage>
        <taxon>Eukaryota</taxon>
        <taxon>Metazoa</taxon>
        <taxon>Chordata</taxon>
        <taxon>Craniata</taxon>
        <taxon>Vertebrata</taxon>
        <taxon>Euteleostomi</taxon>
        <taxon>Amphibia</taxon>
        <taxon>Batrachia</taxon>
        <taxon>Anura</taxon>
        <taxon>Neobatrachia</taxon>
        <taxon>Ranoidea</taxon>
        <taxon>Ranidae</taxon>
        <taxon>Aquarana</taxon>
    </lineage>
</organism>
<accession>P31226</accession>